<evidence type="ECO:0000255" key="1">
    <source>
        <dbReference type="HAMAP-Rule" id="MF_00096"/>
    </source>
</evidence>
<protein>
    <recommendedName>
        <fullName evidence="1">DNA mismatch repair protein MutS</fullName>
    </recommendedName>
</protein>
<feature type="chain" id="PRO_0000115112" description="DNA mismatch repair protein MutS">
    <location>
        <begin position="1"/>
        <end position="864"/>
    </location>
</feature>
<feature type="binding site" evidence="1">
    <location>
        <begin position="607"/>
        <end position="614"/>
    </location>
    <ligand>
        <name>ATP</name>
        <dbReference type="ChEBI" id="CHEBI:30616"/>
    </ligand>
</feature>
<keyword id="KW-0067">ATP-binding</keyword>
<keyword id="KW-0227">DNA damage</keyword>
<keyword id="KW-0234">DNA repair</keyword>
<keyword id="KW-0238">DNA-binding</keyword>
<keyword id="KW-0547">Nucleotide-binding</keyword>
<keyword id="KW-1185">Reference proteome</keyword>
<name>MUTS_NEIMB</name>
<reference key="1">
    <citation type="journal article" date="2000" name="Science">
        <title>Complete genome sequence of Neisseria meningitidis serogroup B strain MC58.</title>
        <authorList>
            <person name="Tettelin H."/>
            <person name="Saunders N.J."/>
            <person name="Heidelberg J.F."/>
            <person name="Jeffries A.C."/>
            <person name="Nelson K.E."/>
            <person name="Eisen J.A."/>
            <person name="Ketchum K.A."/>
            <person name="Hood D.W."/>
            <person name="Peden J.F."/>
            <person name="Dodson R.J."/>
            <person name="Nelson W.C."/>
            <person name="Gwinn M.L."/>
            <person name="DeBoy R.T."/>
            <person name="Peterson J.D."/>
            <person name="Hickey E.K."/>
            <person name="Haft D.H."/>
            <person name="Salzberg S.L."/>
            <person name="White O."/>
            <person name="Fleischmann R.D."/>
            <person name="Dougherty B.A."/>
            <person name="Mason T.M."/>
            <person name="Ciecko A."/>
            <person name="Parksey D.S."/>
            <person name="Blair E."/>
            <person name="Cittone H."/>
            <person name="Clark E.B."/>
            <person name="Cotton M.D."/>
            <person name="Utterback T.R."/>
            <person name="Khouri H.M."/>
            <person name="Qin H."/>
            <person name="Vamathevan J.J."/>
            <person name="Gill J."/>
            <person name="Scarlato V."/>
            <person name="Masignani V."/>
            <person name="Pizza M."/>
            <person name="Grandi G."/>
            <person name="Sun L."/>
            <person name="Smith H.O."/>
            <person name="Fraser C.M."/>
            <person name="Moxon E.R."/>
            <person name="Rappuoli R."/>
            <person name="Venter J.C."/>
        </authorList>
    </citation>
    <scope>NUCLEOTIDE SEQUENCE [LARGE SCALE GENOMIC DNA]</scope>
    <source>
        <strain>ATCC BAA-335 / MC58</strain>
    </source>
</reference>
<proteinExistence type="inferred from homology"/>
<gene>
    <name evidence="1" type="primary">mutS</name>
    <name type="ordered locus">NMB2160</name>
</gene>
<comment type="function">
    <text evidence="1">This protein is involved in the repair of mismatches in DNA. It is possible that it carries out the mismatch recognition step. This protein has a weak ATPase activity.</text>
</comment>
<comment type="similarity">
    <text evidence="1">Belongs to the DNA mismatch repair MutS family.</text>
</comment>
<accession>Q9JX94</accession>
<organism>
    <name type="scientific">Neisseria meningitidis serogroup B (strain ATCC BAA-335 / MC58)</name>
    <dbReference type="NCBI Taxonomy" id="122586"/>
    <lineage>
        <taxon>Bacteria</taxon>
        <taxon>Pseudomonadati</taxon>
        <taxon>Pseudomonadota</taxon>
        <taxon>Betaproteobacteria</taxon>
        <taxon>Neisseriales</taxon>
        <taxon>Neisseriaceae</taxon>
        <taxon>Neisseria</taxon>
    </lineage>
</organism>
<sequence>MSKSAVSPMMQQYLGIKAQHTDKLVFYRMGDFYEMFFDDAVEAAKLLDITLTTRGQVDGEPVKMAGVPFHAAEQYLARLVKLGKSVAICEQVGEVGAGKGPVERKVVRIVTPGTLTDSALLEDKETNRIVAVSPDKKYIGLAWASLQSGEFKTKLTTVDKLDDELARLQAAEILLPDSKNAPQLQTASGVTRLNAWQFAADAGEKLLTEYFGCQDLRGFGLDGKEHAVAIGAAGALLNYIRLTQNLMPQHLDGLSLETDSQYIGMDAATRRNLEITQTLSGKKSPTLMSTLDLCATHMGSRLLALWLHHPLRNRAHIRARQEAVAALESQYKPLQCRLKSIADIERIAARIAVGNARPRDLAALRDSLFALSEIELSAECSSLLGTLKAVFPENLSTAEQLRQAILPEPSVWLKDGNVINHGFHPELDELRRIQNHGDEFLLDLEAKERERTGLSTLKVEFNRVHGFYIELSKTQAEQAPADYQRRQTLKNAERFITPELKAFEDKVLTAQEQALALEKQLFDGVLKNLQTALPQLQKAAKAAAALDVLSTFSALAKERNFVRPEFADYPVIHIENGRHPVVEQQVRHFTANHTDLDHKHRLMLLTGPNMGGKSTYMRQVALIVLLAHTGCFVPADAATIGPIDQIFTRIGASDDLASNRSTFMVEMSETAYILHHATEQSLVLMDEVGRGTSTFDGLALAHAVAEHLLQKNKSFSLFATHYFELTYLPEAHTAAVNMHLSALEQGQDIVFLHQIQPGPAGKSYGIAVAKLAGLPVRALKSAQKHLNGLENQAAANRPQLDIFSTMPSEKGDEPNVGNFVDKAEEKHFEGILAAALEKLDPDSLTPREALSELYRLKDLCKSVS</sequence>
<dbReference type="EMBL" id="AE002098">
    <property type="protein sequence ID" value="AAF42468.1"/>
    <property type="molecule type" value="Genomic_DNA"/>
</dbReference>
<dbReference type="PIR" id="A81000">
    <property type="entry name" value="A81000"/>
</dbReference>
<dbReference type="RefSeq" id="NP_275145.1">
    <property type="nucleotide sequence ID" value="NC_003112.2"/>
</dbReference>
<dbReference type="RefSeq" id="WP_002225746.1">
    <property type="nucleotide sequence ID" value="NC_003112.2"/>
</dbReference>
<dbReference type="SMR" id="Q9JX94"/>
<dbReference type="FunCoup" id="Q9JX94">
    <property type="interactions" value="429"/>
</dbReference>
<dbReference type="STRING" id="122586.NMB2160"/>
<dbReference type="PaxDb" id="122586-NMB2160"/>
<dbReference type="KEGG" id="nme:NMB2160"/>
<dbReference type="PATRIC" id="fig|122586.8.peg.2756"/>
<dbReference type="HOGENOM" id="CLU_002472_4_1_4"/>
<dbReference type="InParanoid" id="Q9JX94"/>
<dbReference type="OrthoDB" id="9802448at2"/>
<dbReference type="Proteomes" id="UP000000425">
    <property type="component" value="Chromosome"/>
</dbReference>
<dbReference type="GO" id="GO:0005829">
    <property type="term" value="C:cytosol"/>
    <property type="evidence" value="ECO:0000318"/>
    <property type="project" value="GO_Central"/>
</dbReference>
<dbReference type="GO" id="GO:0005524">
    <property type="term" value="F:ATP binding"/>
    <property type="evidence" value="ECO:0007669"/>
    <property type="project" value="UniProtKB-UniRule"/>
</dbReference>
<dbReference type="GO" id="GO:0140664">
    <property type="term" value="F:ATP-dependent DNA damage sensor activity"/>
    <property type="evidence" value="ECO:0007669"/>
    <property type="project" value="InterPro"/>
</dbReference>
<dbReference type="GO" id="GO:0003684">
    <property type="term" value="F:damaged DNA binding"/>
    <property type="evidence" value="ECO:0007669"/>
    <property type="project" value="UniProtKB-UniRule"/>
</dbReference>
<dbReference type="GO" id="GO:0030983">
    <property type="term" value="F:mismatched DNA binding"/>
    <property type="evidence" value="ECO:0000318"/>
    <property type="project" value="GO_Central"/>
</dbReference>
<dbReference type="GO" id="GO:0006298">
    <property type="term" value="P:mismatch repair"/>
    <property type="evidence" value="ECO:0000318"/>
    <property type="project" value="GO_Central"/>
</dbReference>
<dbReference type="CDD" id="cd03284">
    <property type="entry name" value="ABC_MutS1"/>
    <property type="match status" value="1"/>
</dbReference>
<dbReference type="FunFam" id="1.10.1420.10:FF:000018">
    <property type="entry name" value="DNA mismatch repair protein MutS"/>
    <property type="match status" value="1"/>
</dbReference>
<dbReference type="FunFam" id="3.40.1170.10:FF:000001">
    <property type="entry name" value="DNA mismatch repair protein MutS"/>
    <property type="match status" value="1"/>
</dbReference>
<dbReference type="FunFam" id="3.40.50.300:FF:000283">
    <property type="entry name" value="DNA mismatch repair protein MutS"/>
    <property type="match status" value="1"/>
</dbReference>
<dbReference type="Gene3D" id="1.10.1420.10">
    <property type="match status" value="2"/>
</dbReference>
<dbReference type="Gene3D" id="6.10.140.430">
    <property type="match status" value="1"/>
</dbReference>
<dbReference type="Gene3D" id="3.40.1170.10">
    <property type="entry name" value="DNA repair protein MutS, domain I"/>
    <property type="match status" value="1"/>
</dbReference>
<dbReference type="Gene3D" id="3.30.420.110">
    <property type="entry name" value="MutS, connector domain"/>
    <property type="match status" value="1"/>
</dbReference>
<dbReference type="Gene3D" id="3.40.50.300">
    <property type="entry name" value="P-loop containing nucleotide triphosphate hydrolases"/>
    <property type="match status" value="1"/>
</dbReference>
<dbReference type="HAMAP" id="MF_00096">
    <property type="entry name" value="MutS"/>
    <property type="match status" value="1"/>
</dbReference>
<dbReference type="InterPro" id="IPR005748">
    <property type="entry name" value="DNA_mismatch_repair_MutS"/>
</dbReference>
<dbReference type="InterPro" id="IPR007695">
    <property type="entry name" value="DNA_mismatch_repair_MutS-lik_N"/>
</dbReference>
<dbReference type="InterPro" id="IPR017261">
    <property type="entry name" value="DNA_mismatch_repair_MutS/MSH"/>
</dbReference>
<dbReference type="InterPro" id="IPR000432">
    <property type="entry name" value="DNA_mismatch_repair_MutS_C"/>
</dbReference>
<dbReference type="InterPro" id="IPR007861">
    <property type="entry name" value="DNA_mismatch_repair_MutS_clamp"/>
</dbReference>
<dbReference type="InterPro" id="IPR007696">
    <property type="entry name" value="DNA_mismatch_repair_MutS_core"/>
</dbReference>
<dbReference type="InterPro" id="IPR016151">
    <property type="entry name" value="DNA_mismatch_repair_MutS_N"/>
</dbReference>
<dbReference type="InterPro" id="IPR036187">
    <property type="entry name" value="DNA_mismatch_repair_MutS_sf"/>
</dbReference>
<dbReference type="InterPro" id="IPR007860">
    <property type="entry name" value="DNA_mmatch_repair_MutS_con_dom"/>
</dbReference>
<dbReference type="InterPro" id="IPR045076">
    <property type="entry name" value="MutS"/>
</dbReference>
<dbReference type="InterPro" id="IPR036678">
    <property type="entry name" value="MutS_con_dom_sf"/>
</dbReference>
<dbReference type="InterPro" id="IPR027417">
    <property type="entry name" value="P-loop_NTPase"/>
</dbReference>
<dbReference type="NCBIfam" id="TIGR01070">
    <property type="entry name" value="mutS1"/>
    <property type="match status" value="1"/>
</dbReference>
<dbReference type="NCBIfam" id="NF003810">
    <property type="entry name" value="PRK05399.1"/>
    <property type="match status" value="1"/>
</dbReference>
<dbReference type="PANTHER" id="PTHR11361:SF34">
    <property type="entry name" value="DNA MISMATCH REPAIR PROTEIN MSH1, MITOCHONDRIAL"/>
    <property type="match status" value="1"/>
</dbReference>
<dbReference type="PANTHER" id="PTHR11361">
    <property type="entry name" value="DNA MISMATCH REPAIR PROTEIN MUTS FAMILY MEMBER"/>
    <property type="match status" value="1"/>
</dbReference>
<dbReference type="Pfam" id="PF01624">
    <property type="entry name" value="MutS_I"/>
    <property type="match status" value="1"/>
</dbReference>
<dbReference type="Pfam" id="PF05188">
    <property type="entry name" value="MutS_II"/>
    <property type="match status" value="1"/>
</dbReference>
<dbReference type="Pfam" id="PF05192">
    <property type="entry name" value="MutS_III"/>
    <property type="match status" value="1"/>
</dbReference>
<dbReference type="Pfam" id="PF05190">
    <property type="entry name" value="MutS_IV"/>
    <property type="match status" value="1"/>
</dbReference>
<dbReference type="Pfam" id="PF00488">
    <property type="entry name" value="MutS_V"/>
    <property type="match status" value="1"/>
</dbReference>
<dbReference type="PIRSF" id="PIRSF037677">
    <property type="entry name" value="DNA_mis_repair_Msh6"/>
    <property type="match status" value="1"/>
</dbReference>
<dbReference type="SMART" id="SM00534">
    <property type="entry name" value="MUTSac"/>
    <property type="match status" value="1"/>
</dbReference>
<dbReference type="SMART" id="SM00533">
    <property type="entry name" value="MUTSd"/>
    <property type="match status" value="1"/>
</dbReference>
<dbReference type="SUPFAM" id="SSF55271">
    <property type="entry name" value="DNA repair protein MutS, domain I"/>
    <property type="match status" value="1"/>
</dbReference>
<dbReference type="SUPFAM" id="SSF53150">
    <property type="entry name" value="DNA repair protein MutS, domain II"/>
    <property type="match status" value="1"/>
</dbReference>
<dbReference type="SUPFAM" id="SSF48334">
    <property type="entry name" value="DNA repair protein MutS, domain III"/>
    <property type="match status" value="1"/>
</dbReference>
<dbReference type="SUPFAM" id="SSF52540">
    <property type="entry name" value="P-loop containing nucleoside triphosphate hydrolases"/>
    <property type="match status" value="1"/>
</dbReference>
<dbReference type="PROSITE" id="PS00486">
    <property type="entry name" value="DNA_MISMATCH_REPAIR_2"/>
    <property type="match status" value="1"/>
</dbReference>